<comment type="function">
    <text evidence="4">FAD-dependent monooxygenase; part of the gene cluster that mediates the biosynthesis of the bibenzoquinone oosporein, a metabolite required for fungal virulence that acts by evading host immunity to facilitate fungal multiplication in insects (PubMed:26305932). The non-reducing polyketide synthase OpS1 produces orsellinic acid by condensing acetyl-CoA with 3 malonyl-CoA units (PubMed:26305932). Orsellinic acid is then hydroxylated to benzenetriol by the hydroxylase OpS4 (PubMed:26305932). The intermediate is oxidized either nonenzymatically to 5,5'-dideoxy-oosporein or enzymatically to benzenetetrol by the oxidoreductase OpS7 (PubMed:26305932). The latter is further dimerized to oosporein by the catalase OpS5 (PubMed:26305932). OpS6 probably functions en route for protecting cells against oxidative stress by scavenging any leaked free radical form of benzenetetrol by activating the thiol group of glutathione (PubMed:26305932).</text>
</comment>
<comment type="cofactor">
    <cofactor evidence="6">
        <name>FAD</name>
        <dbReference type="ChEBI" id="CHEBI:57692"/>
    </cofactor>
</comment>
<comment type="pathway">
    <text evidence="4">Secondary metabolite biosynthesis.</text>
</comment>
<comment type="induction">
    <text evidence="4">Expression is positively regulated by the oosporein cluster specific regulator OpS3 that binds the promoter at a 5'-CGGA-3' motif (PubMed:26305932). Expression is negatively regulated by the global transcription factor Msn2 that binds the stress-response element 5'-AGGGG-3' (PubMed:26305932).</text>
</comment>
<comment type="disruption phenotype">
    <text evidence="4">Impairs the production of oosporein and leads to the accumulation of orsellinic acid (PubMed:26305932).</text>
</comment>
<comment type="similarity">
    <text evidence="6">Belongs to the paxM FAD-dependent monooxygenase family.</text>
</comment>
<organism>
    <name type="scientific">Beauveria bassiana (strain ARSEF 2860)</name>
    <name type="common">White muscardine disease fungus</name>
    <name type="synonym">Tritirachium shiotae</name>
    <dbReference type="NCBI Taxonomy" id="655819"/>
    <lineage>
        <taxon>Eukaryota</taxon>
        <taxon>Fungi</taxon>
        <taxon>Dikarya</taxon>
        <taxon>Ascomycota</taxon>
        <taxon>Pezizomycotina</taxon>
        <taxon>Sordariomycetes</taxon>
        <taxon>Hypocreomycetidae</taxon>
        <taxon>Hypocreales</taxon>
        <taxon>Cordycipitaceae</taxon>
        <taxon>Beauveria</taxon>
    </lineage>
</organism>
<evidence type="ECO:0000250" key="1">
    <source>
        <dbReference type="UniProtKB" id="B8M9J8"/>
    </source>
</evidence>
<evidence type="ECO:0000255" key="2"/>
<evidence type="ECO:0000255" key="3">
    <source>
        <dbReference type="PROSITE-ProRule" id="PRU00498"/>
    </source>
</evidence>
<evidence type="ECO:0000269" key="4">
    <source>
    </source>
</evidence>
<evidence type="ECO:0000303" key="5">
    <source>
    </source>
</evidence>
<evidence type="ECO:0000305" key="6"/>
<sequence length="427" mass="47309">MGSIREPLHLVVIGGGLAGLSAAIATRLEGHRCTLLEKAPEFNEVGAGLQLTPNSTRLLRRWGVLDKLRSKAGIPTQLTVRRYDGSKVLSRADGWDETMQSQYDAPFWDMHRADLQAAMVARARHLGVDVRTGAEVESIDTDGVAVILAGTRERLQGDVVLAADGLWSRTRAALFPDLGTAPQPTGDLAYRIILRLENLQHDPELAAWVAKPTVNFWVGADAHAVAYSVRGGSELNLVLLCPDDLPEGCARAQADLEEMRARFQGWDPLLCRFLDNVKTVEKWRLMHMPSLPKWNHESGYFTMAGDSCHPMLPYLAQGANSAMEDGAVLGRLLGSIHEASRIPDVLAVYQEIRKVRVEKIAKQALKQRYNFHMPDGPLQEARDEAMTTHQQREEEYASQWTCPIMQPWLYGYDAIAVADSAVANTKL</sequence>
<proteinExistence type="evidence at protein level"/>
<reference key="1">
    <citation type="journal article" date="2012" name="Sci. Rep.">
        <title>Genomic perspectives on the evolution of fungal entomopathogenicity in Beauveria bassiana.</title>
        <authorList>
            <person name="Xiao G."/>
            <person name="Ying S.-H."/>
            <person name="Zheng P."/>
            <person name="Wang Z.-L."/>
            <person name="Zhang S."/>
            <person name="Xie X.-Q."/>
            <person name="Shang Y."/>
            <person name="St Leger R.J."/>
            <person name="Zhao G.-P."/>
            <person name="Wang C."/>
            <person name="Feng M.-G."/>
        </authorList>
    </citation>
    <scope>NUCLEOTIDE SEQUENCE [LARGE SCALE GENOMIC DNA]</scope>
    <source>
        <strain>ARSEF 2860</strain>
    </source>
</reference>
<reference key="2">
    <citation type="journal article" date="2015" name="Proc. Natl. Acad. Sci. U.S.A.">
        <title>Fungal biosynthesis of the bibenzoquinone oosporein to evade insect immunity.</title>
        <authorList>
            <person name="Feng P."/>
            <person name="Shang Y."/>
            <person name="Cen K."/>
            <person name="Wang C."/>
        </authorList>
    </citation>
    <scope>FUNCTION</scope>
    <scope>DISRUPTION PHENOTYPE</scope>
    <scope>INDUCTION</scope>
    <scope>CATALYTIC ACTIVITY</scope>
    <scope>PATHWAY</scope>
</reference>
<keyword id="KW-0274">FAD</keyword>
<keyword id="KW-0285">Flavoprotein</keyword>
<keyword id="KW-0325">Glycoprotein</keyword>
<keyword id="KW-0503">Monooxygenase</keyword>
<keyword id="KW-0560">Oxidoreductase</keyword>
<keyword id="KW-1185">Reference proteome</keyword>
<keyword id="KW-0732">Signal</keyword>
<keyword id="KW-0843">Virulence</keyword>
<protein>
    <recommendedName>
        <fullName evidence="5">FAD-dependent monooxygenase OpS4</fullName>
        <ecNumber evidence="4">1.-.-.-</ecNumber>
    </recommendedName>
    <alternativeName>
        <fullName evidence="5">Oosporein biosynthesis protein 4</fullName>
    </alternativeName>
</protein>
<dbReference type="EC" id="1.-.-.-" evidence="4"/>
<dbReference type="EMBL" id="JH725181">
    <property type="protein sequence ID" value="EJP62795.1"/>
    <property type="molecule type" value="Genomic_DNA"/>
</dbReference>
<dbReference type="RefSeq" id="XP_008601501.1">
    <property type="nucleotide sequence ID" value="XM_008603279.1"/>
</dbReference>
<dbReference type="SMR" id="J4VWM7"/>
<dbReference type="STRING" id="655819.J4VWM7"/>
<dbReference type="GlyCosmos" id="J4VWM7">
    <property type="glycosylation" value="1 site, No reported glycans"/>
</dbReference>
<dbReference type="GeneID" id="19891194"/>
<dbReference type="HOGENOM" id="CLU_009665_19_3_1"/>
<dbReference type="InParanoid" id="J4VWM7"/>
<dbReference type="OrthoDB" id="2510at474943"/>
<dbReference type="Proteomes" id="UP000002762">
    <property type="component" value="Unassembled WGS sequence"/>
</dbReference>
<dbReference type="GO" id="GO:0071949">
    <property type="term" value="F:FAD binding"/>
    <property type="evidence" value="ECO:0007669"/>
    <property type="project" value="InterPro"/>
</dbReference>
<dbReference type="GO" id="GO:0004497">
    <property type="term" value="F:monooxygenase activity"/>
    <property type="evidence" value="ECO:0007669"/>
    <property type="project" value="UniProtKB-KW"/>
</dbReference>
<dbReference type="FunFam" id="3.50.50.60:FF:000115">
    <property type="entry name" value="Salicylate hydroxylase, putative"/>
    <property type="match status" value="1"/>
</dbReference>
<dbReference type="Gene3D" id="3.50.50.60">
    <property type="entry name" value="FAD/NAD(P)-binding domain"/>
    <property type="match status" value="1"/>
</dbReference>
<dbReference type="InterPro" id="IPR002938">
    <property type="entry name" value="FAD-bd"/>
</dbReference>
<dbReference type="InterPro" id="IPR050493">
    <property type="entry name" value="FAD-dep_Monooxygenase_BioMet"/>
</dbReference>
<dbReference type="InterPro" id="IPR036188">
    <property type="entry name" value="FAD/NAD-bd_sf"/>
</dbReference>
<dbReference type="PANTHER" id="PTHR13789">
    <property type="entry name" value="MONOOXYGENASE"/>
    <property type="match status" value="1"/>
</dbReference>
<dbReference type="PANTHER" id="PTHR13789:SF238">
    <property type="entry name" value="PUTATIVE (AFU_ORTHOLOGUE AFUA_2G01680)-RELATED"/>
    <property type="match status" value="1"/>
</dbReference>
<dbReference type="Pfam" id="PF01494">
    <property type="entry name" value="FAD_binding_3"/>
    <property type="match status" value="1"/>
</dbReference>
<dbReference type="PRINTS" id="PR00420">
    <property type="entry name" value="RNGMNOXGNASE"/>
</dbReference>
<dbReference type="SUPFAM" id="SSF54373">
    <property type="entry name" value="FAD-linked reductases, C-terminal domain"/>
    <property type="match status" value="1"/>
</dbReference>
<dbReference type="SUPFAM" id="SSF51905">
    <property type="entry name" value="FAD/NAD(P)-binding domain"/>
    <property type="match status" value="1"/>
</dbReference>
<name>OPS4_BEAB2</name>
<feature type="signal peptide" evidence="2">
    <location>
        <begin position="1"/>
        <end position="22"/>
    </location>
</feature>
<feature type="chain" id="PRO_0000438575" description="FAD-dependent monooxygenase OpS4" evidence="2">
    <location>
        <begin position="23"/>
        <end position="427"/>
    </location>
</feature>
<feature type="binding site" evidence="1">
    <location>
        <position position="37"/>
    </location>
    <ligand>
        <name>FAD</name>
        <dbReference type="ChEBI" id="CHEBI:57692"/>
    </ligand>
</feature>
<feature type="binding site" evidence="1">
    <location>
        <position position="112"/>
    </location>
    <ligand>
        <name>FAD</name>
        <dbReference type="ChEBI" id="CHEBI:57692"/>
    </ligand>
</feature>
<feature type="binding site" evidence="1">
    <location>
        <position position="306"/>
    </location>
    <ligand>
        <name>FAD</name>
        <dbReference type="ChEBI" id="CHEBI:57692"/>
    </ligand>
</feature>
<feature type="binding site" evidence="1">
    <location>
        <position position="319"/>
    </location>
    <ligand>
        <name>FAD</name>
        <dbReference type="ChEBI" id="CHEBI:57692"/>
    </ligand>
</feature>
<feature type="glycosylation site" description="N-linked (GlcNAc...) asparagine" evidence="3">
    <location>
        <position position="54"/>
    </location>
</feature>
<accession>J4VWM7</accession>
<gene>
    <name evidence="5" type="primary">OpS4</name>
    <name type="ORF">BBA_08182</name>
</gene>